<evidence type="ECO:0000250" key="1">
    <source>
        <dbReference type="UniProtKB" id="P27101"/>
    </source>
</evidence>
<evidence type="ECO:0000250" key="2">
    <source>
        <dbReference type="UniProtKB" id="P94135"/>
    </source>
</evidence>
<evidence type="ECO:0000305" key="3"/>
<evidence type="ECO:0000312" key="4">
    <source>
        <dbReference type="EMBL" id="AAK57010.2"/>
    </source>
</evidence>
<proteinExistence type="evidence at protein level"/>
<comment type="catalytic activity">
    <reaction evidence="1">
        <text>3-oxoadipate + NAD(+) = maleylacetate + NADH + H(+)</text>
        <dbReference type="Rhea" id="RHEA:16981"/>
        <dbReference type="ChEBI" id="CHEBI:15378"/>
        <dbReference type="ChEBI" id="CHEBI:15775"/>
        <dbReference type="ChEBI" id="CHEBI:16468"/>
        <dbReference type="ChEBI" id="CHEBI:57540"/>
        <dbReference type="ChEBI" id="CHEBI:57945"/>
        <dbReference type="EC" id="1.3.1.32"/>
    </reaction>
</comment>
<comment type="catalytic activity">
    <reaction evidence="1">
        <text>3-oxoadipate + NADP(+) = maleylacetate + NADPH + H(+)</text>
        <dbReference type="Rhea" id="RHEA:16985"/>
        <dbReference type="ChEBI" id="CHEBI:15378"/>
        <dbReference type="ChEBI" id="CHEBI:15775"/>
        <dbReference type="ChEBI" id="CHEBI:16468"/>
        <dbReference type="ChEBI" id="CHEBI:57783"/>
        <dbReference type="ChEBI" id="CHEBI:58349"/>
        <dbReference type="EC" id="1.3.1.32"/>
    </reaction>
</comment>
<comment type="pathway">
    <text>Aromatic compound metabolism; 3-chlorocatechol degradation.</text>
</comment>
<comment type="subunit">
    <text evidence="2 3">Homodimer.</text>
</comment>
<comment type="similarity">
    <text evidence="3">Belongs to the iron-containing alcohol dehydrogenase family.</text>
</comment>
<name>TFDF_DELAC</name>
<feature type="chain" id="PRO_0000087850" description="Maleylacetate reductase">
    <location>
        <begin position="1"/>
        <end position="352"/>
    </location>
</feature>
<dbReference type="EC" id="1.3.1.32"/>
<dbReference type="EMBL" id="AY078159">
    <property type="protein sequence ID" value="AAK57010.2"/>
    <property type="molecule type" value="Genomic_DNA"/>
</dbReference>
<dbReference type="RefSeq" id="WP_011255148.1">
    <property type="nucleotide sequence ID" value="NC_019283.1"/>
</dbReference>
<dbReference type="RefSeq" id="YP_006961879.1">
    <property type="nucleotide sequence ID" value="NC_019283.1"/>
</dbReference>
<dbReference type="SMR" id="Q93T12"/>
<dbReference type="UniPathway" id="UPA00083"/>
<dbReference type="PRO" id="PR:Q93T12"/>
<dbReference type="GO" id="GO:0004022">
    <property type="term" value="F:alcohol dehydrogenase (NAD+) activity"/>
    <property type="evidence" value="ECO:0007669"/>
    <property type="project" value="TreeGrafter"/>
</dbReference>
<dbReference type="GO" id="GO:0018506">
    <property type="term" value="F:maleylacetate reductase activity"/>
    <property type="evidence" value="ECO:0007669"/>
    <property type="project" value="UniProtKB-EC"/>
</dbReference>
<dbReference type="GO" id="GO:0046872">
    <property type="term" value="F:metal ion binding"/>
    <property type="evidence" value="ECO:0007669"/>
    <property type="project" value="InterPro"/>
</dbReference>
<dbReference type="GO" id="GO:0009056">
    <property type="term" value="P:catabolic process"/>
    <property type="evidence" value="ECO:0007669"/>
    <property type="project" value="UniProtKB-KW"/>
</dbReference>
<dbReference type="CDD" id="cd08177">
    <property type="entry name" value="MAR"/>
    <property type="match status" value="1"/>
</dbReference>
<dbReference type="Gene3D" id="3.40.50.1970">
    <property type="match status" value="1"/>
</dbReference>
<dbReference type="Gene3D" id="1.20.1090.10">
    <property type="entry name" value="Dehydroquinate synthase-like - alpha domain"/>
    <property type="match status" value="1"/>
</dbReference>
<dbReference type="InterPro" id="IPR001670">
    <property type="entry name" value="ADH_Fe/GldA"/>
</dbReference>
<dbReference type="InterPro" id="IPR056798">
    <property type="entry name" value="ADH_Fe_C"/>
</dbReference>
<dbReference type="InterPro" id="IPR039697">
    <property type="entry name" value="Alcohol_dehydrogenase_Fe"/>
</dbReference>
<dbReference type="InterPro" id="IPR034786">
    <property type="entry name" value="MAR"/>
</dbReference>
<dbReference type="PANTHER" id="PTHR11496">
    <property type="entry name" value="ALCOHOL DEHYDROGENASE"/>
    <property type="match status" value="1"/>
</dbReference>
<dbReference type="PANTHER" id="PTHR11496:SF102">
    <property type="entry name" value="ALCOHOL DEHYDROGENASE 4"/>
    <property type="match status" value="1"/>
</dbReference>
<dbReference type="Pfam" id="PF25137">
    <property type="entry name" value="ADH_Fe_C"/>
    <property type="match status" value="1"/>
</dbReference>
<dbReference type="Pfam" id="PF00465">
    <property type="entry name" value="Fe-ADH"/>
    <property type="match status" value="1"/>
</dbReference>
<dbReference type="SUPFAM" id="SSF56796">
    <property type="entry name" value="Dehydroquinate synthase-like"/>
    <property type="match status" value="1"/>
</dbReference>
<accession>Q93T12</accession>
<protein>
    <recommendedName>
        <fullName>Maleylacetate reductase</fullName>
        <ecNumber>1.3.1.32</ecNumber>
    </recommendedName>
    <alternativeName>
        <fullName>Chloromaleylacetate reductase</fullName>
    </alternativeName>
</protein>
<sequence length="352" mass="37499">MNFIHDPLTPRVLFGAGRLQSLGEELKLLGIRRVLVISTPEQRELANQVAALIPGSVAGFFDRATMHVPSQIVDQAASVARELGVDSYVAPGGGSTIGLAKMLALHSSLPIVAIPTTYAGSEMTSIYGVTENELKKTGRDRRVLARTVIYDPELTFGLPTGISVTSGLNAIAHAVEGLYAPEVNPILAIMAQQGIAALAKSIPTIRSAPTDLEARSQAQYGAWLCGSVLGNVSMALHHKLCHTLGGTFNLPHAETHTVVLPHALAYNTPAIPRANAWLQEALATREPAQALFDLAKSNGAPVSLQSIGMKEADLDRACELVMSAQYPNPRPLEKHAIANLLRRAYLGEPPQP</sequence>
<reference evidence="3" key="1">
    <citation type="journal article" date="2003" name="Microbiology">
        <title>A transposon encoding the complete 2,4-dichlorophenoxyacetic acid degradation pathway in the alkalitolerant strain Delftia acidovorans P4a.</title>
        <authorList>
            <person name="Hoffmann D."/>
            <person name="Kleinsteuber S."/>
            <person name="Mueller R.H."/>
            <person name="Babel W."/>
        </authorList>
    </citation>
    <scope>NUCLEOTIDE SEQUENCE [GENOMIC DNA]</scope>
    <source>
        <strain evidence="4">P4a</strain>
    </source>
</reference>
<reference evidence="3" key="2">
    <citation type="journal article" date="2001" name="Acta Biotechnol.">
        <title>Development and application of PCR primers for the detection of the tfd genes in Delftia acidovorans P4a involved in the degradation of 2,4-D.</title>
        <authorList>
            <person name="Hoffmann D."/>
            <person name="Kleinsteuber S."/>
            <person name="Mueller R.H."/>
            <person name="Babel W."/>
        </authorList>
    </citation>
    <scope>NUCLEOTIDE SEQUENCE [GENOMIC DNA] OF 101-235</scope>
    <source>
        <strain evidence="4">P4a</strain>
    </source>
</reference>
<reference key="3">
    <citation type="journal article" date="2004" name="Microbiology">
        <title>Regulation of catabolic enzymes during long-term exposure of Delftia acidovorans MC1 to chlorophenoxy herbicides.</title>
        <authorList>
            <person name="Benndorf D."/>
            <person name="Davidson I."/>
            <person name="Babel W."/>
        </authorList>
    </citation>
    <scope>PROTEIN SEQUENCE OF 1-15</scope>
    <source>
        <strain>MC1</strain>
    </source>
</reference>
<keyword id="KW-0058">Aromatic hydrocarbons catabolism</keyword>
<keyword id="KW-0903">Direct protein sequencing</keyword>
<keyword id="KW-0520">NAD</keyword>
<keyword id="KW-0560">Oxidoreductase</keyword>
<gene>
    <name type="primary">tfdF</name>
</gene>
<organism evidence="4">
    <name type="scientific">Delftia acidovorans</name>
    <name type="common">Pseudomonas acidovorans</name>
    <name type="synonym">Comamonas acidovorans</name>
    <dbReference type="NCBI Taxonomy" id="80866"/>
    <lineage>
        <taxon>Bacteria</taxon>
        <taxon>Pseudomonadati</taxon>
        <taxon>Pseudomonadota</taxon>
        <taxon>Betaproteobacteria</taxon>
        <taxon>Burkholderiales</taxon>
        <taxon>Comamonadaceae</taxon>
        <taxon>Delftia</taxon>
    </lineage>
</organism>